<feature type="signal peptide" evidence="1">
    <location>
        <begin position="1"/>
        <end position="19"/>
    </location>
</feature>
<feature type="chain" id="PRO_0000393338" description="Uncharacterized protein DDB_G0291392">
    <location>
        <begin position="20"/>
        <end position="444"/>
    </location>
</feature>
<feature type="propeptide" id="PRO_0000393339" description="Removed in mature form" evidence="1">
    <location>
        <begin position="445"/>
        <end position="468"/>
    </location>
</feature>
<feature type="region of interest" description="Disordered" evidence="2">
    <location>
        <begin position="401"/>
        <end position="421"/>
    </location>
</feature>
<feature type="compositionally biased region" description="Pro residues" evidence="2">
    <location>
        <begin position="409"/>
        <end position="421"/>
    </location>
</feature>
<feature type="lipid moiety-binding region" description="GPI-like-anchor amidated asparagine" evidence="1">
    <location>
        <position position="444"/>
    </location>
</feature>
<feature type="glycosylation site" description="N-linked (GlcNAc...) asparagine" evidence="1">
    <location>
        <position position="86"/>
    </location>
</feature>
<feature type="glycosylation site" description="N-linked (GlcNAc...) asparagine" evidence="1">
    <location>
        <position position="334"/>
    </location>
</feature>
<feature type="glycosylation site" description="N-linked (GlcNAc...) asparagine" evidence="1">
    <location>
        <position position="435"/>
    </location>
</feature>
<keyword id="KW-1003">Cell membrane</keyword>
<keyword id="KW-0325">Glycoprotein</keyword>
<keyword id="KW-0336">GPI-anchor</keyword>
<keyword id="KW-0449">Lipoprotein</keyword>
<keyword id="KW-0472">Membrane</keyword>
<keyword id="KW-1185">Reference proteome</keyword>
<keyword id="KW-0732">Signal</keyword>
<protein>
    <recommendedName>
        <fullName>Uncharacterized protein DDB_G0291392</fullName>
    </recommendedName>
</protein>
<sequence length="468" mass="49265">MRVLSVLLVALTVAGSAYSQCTVNDASSAQLDSTFGPTTGGDALTFNNNLGNQIQIANNYNFVSNGVVQSNGGDNLVLTGTLTPANSSLTDKFSLRAAFVRTTTPSDVKRELQAGAYTSNGGTVDPSTWSFYQILPDNTKMVSLTNPNTVVTMSENPNTALQVGVGANGKNLQNGASGWFQFKATDGSVSIQSGNGEMEVVDININLGCSSTFDCVSNTYTISKASIDKSLTDQQNDQALYVDQVSTVFGNQQRFDTSSGTVNTISIDQTNGNLRLGAGFTSISDSSITVNCDLRFSPALPSANYQPKLELMNSAYVSGGGSIDPNTWAYYTVNVSGSSCTRNDGTVVTITGDQDNMYLQWGKGANGKNGNFGLSVWLNYVDAALTNPFFDINVDTVCETNPSTNLPETSPPTEQPTAPPATCPPGCIPAIPVVNVTETPAAGNSASSIEMSKLVVAILSLFILAFFH</sequence>
<gene>
    <name type="ORF">DDB_G0291392</name>
</gene>
<dbReference type="EMBL" id="AAFI02000177">
    <property type="protein sequence ID" value="EAL61680.1"/>
    <property type="molecule type" value="Genomic_DNA"/>
</dbReference>
<dbReference type="RefSeq" id="XP_635183.1">
    <property type="nucleotide sequence ID" value="XM_630091.1"/>
</dbReference>
<dbReference type="FunCoup" id="Q54EQ7">
    <property type="interactions" value="362"/>
</dbReference>
<dbReference type="STRING" id="44689.Q54EQ7"/>
<dbReference type="GlyGen" id="Q54EQ7">
    <property type="glycosylation" value="4 sites"/>
</dbReference>
<dbReference type="PaxDb" id="44689-DDB0231407"/>
<dbReference type="EnsemblProtists" id="EAL61680">
    <property type="protein sequence ID" value="EAL61680"/>
    <property type="gene ID" value="DDB_G0291392"/>
</dbReference>
<dbReference type="GeneID" id="8628129"/>
<dbReference type="KEGG" id="ddi:DDB_G0291392"/>
<dbReference type="dictyBase" id="DDB_G0291392"/>
<dbReference type="VEuPathDB" id="AmoebaDB:DDB_G0291392"/>
<dbReference type="eggNOG" id="ENOG502RE5G">
    <property type="taxonomic scope" value="Eukaryota"/>
</dbReference>
<dbReference type="HOGENOM" id="CLU_584525_0_0_1"/>
<dbReference type="InParanoid" id="Q54EQ7"/>
<dbReference type="OMA" id="HASIFFH"/>
<dbReference type="PRO" id="PR:Q54EQ7"/>
<dbReference type="Proteomes" id="UP000002195">
    <property type="component" value="Chromosome 6"/>
</dbReference>
<dbReference type="GO" id="GO:0005886">
    <property type="term" value="C:plasma membrane"/>
    <property type="evidence" value="ECO:0007669"/>
    <property type="project" value="UniProtKB-SubCell"/>
</dbReference>
<dbReference type="GO" id="GO:0098552">
    <property type="term" value="C:side of membrane"/>
    <property type="evidence" value="ECO:0007669"/>
    <property type="project" value="UniProtKB-KW"/>
</dbReference>
<comment type="subcellular location">
    <subcellularLocation>
        <location evidence="5">Cell membrane</location>
        <topology evidence="5">Lipid-anchor</topology>
        <topology evidence="5">GPI-anchor</topology>
    </subcellularLocation>
</comment>
<comment type="developmental stage">
    <text evidence="3">Expressed during late development in prespore cell.</text>
</comment>
<comment type="induction">
    <text evidence="4">Down-regulated in grlA null cells at 16 hours of starvation.</text>
</comment>
<proteinExistence type="evidence at transcript level"/>
<organism>
    <name type="scientific">Dictyostelium discoideum</name>
    <name type="common">Social amoeba</name>
    <dbReference type="NCBI Taxonomy" id="44689"/>
    <lineage>
        <taxon>Eukaryota</taxon>
        <taxon>Amoebozoa</taxon>
        <taxon>Evosea</taxon>
        <taxon>Eumycetozoa</taxon>
        <taxon>Dictyostelia</taxon>
        <taxon>Dictyosteliales</taxon>
        <taxon>Dictyosteliaceae</taxon>
        <taxon>Dictyostelium</taxon>
    </lineage>
</organism>
<accession>Q54EQ7</accession>
<name>Y1392_DICDI</name>
<evidence type="ECO:0000255" key="1"/>
<evidence type="ECO:0000256" key="2">
    <source>
        <dbReference type="SAM" id="MobiDB-lite"/>
    </source>
</evidence>
<evidence type="ECO:0000269" key="3">
    <source>
    </source>
</evidence>
<evidence type="ECO:0000269" key="4">
    <source>
    </source>
</evidence>
<evidence type="ECO:0000305" key="5"/>
<reference key="1">
    <citation type="journal article" date="2005" name="Nature">
        <title>The genome of the social amoeba Dictyostelium discoideum.</title>
        <authorList>
            <person name="Eichinger L."/>
            <person name="Pachebat J.A."/>
            <person name="Gloeckner G."/>
            <person name="Rajandream M.A."/>
            <person name="Sucgang R."/>
            <person name="Berriman M."/>
            <person name="Song J."/>
            <person name="Olsen R."/>
            <person name="Szafranski K."/>
            <person name="Xu Q."/>
            <person name="Tunggal B."/>
            <person name="Kummerfeld S."/>
            <person name="Madera M."/>
            <person name="Konfortov B.A."/>
            <person name="Rivero F."/>
            <person name="Bankier A.T."/>
            <person name="Lehmann R."/>
            <person name="Hamlin N."/>
            <person name="Davies R."/>
            <person name="Gaudet P."/>
            <person name="Fey P."/>
            <person name="Pilcher K."/>
            <person name="Chen G."/>
            <person name="Saunders D."/>
            <person name="Sodergren E.J."/>
            <person name="Davis P."/>
            <person name="Kerhornou A."/>
            <person name="Nie X."/>
            <person name="Hall N."/>
            <person name="Anjard C."/>
            <person name="Hemphill L."/>
            <person name="Bason N."/>
            <person name="Farbrother P."/>
            <person name="Desany B."/>
            <person name="Just E."/>
            <person name="Morio T."/>
            <person name="Rost R."/>
            <person name="Churcher C.M."/>
            <person name="Cooper J."/>
            <person name="Haydock S."/>
            <person name="van Driessche N."/>
            <person name="Cronin A."/>
            <person name="Goodhead I."/>
            <person name="Muzny D.M."/>
            <person name="Mourier T."/>
            <person name="Pain A."/>
            <person name="Lu M."/>
            <person name="Harper D."/>
            <person name="Lindsay R."/>
            <person name="Hauser H."/>
            <person name="James K.D."/>
            <person name="Quiles M."/>
            <person name="Madan Babu M."/>
            <person name="Saito T."/>
            <person name="Buchrieser C."/>
            <person name="Wardroper A."/>
            <person name="Felder M."/>
            <person name="Thangavelu M."/>
            <person name="Johnson D."/>
            <person name="Knights A."/>
            <person name="Loulseged H."/>
            <person name="Mungall K.L."/>
            <person name="Oliver K."/>
            <person name="Price C."/>
            <person name="Quail M.A."/>
            <person name="Urushihara H."/>
            <person name="Hernandez J."/>
            <person name="Rabbinowitsch E."/>
            <person name="Steffen D."/>
            <person name="Sanders M."/>
            <person name="Ma J."/>
            <person name="Kohara Y."/>
            <person name="Sharp S."/>
            <person name="Simmonds M.N."/>
            <person name="Spiegler S."/>
            <person name="Tivey A."/>
            <person name="Sugano S."/>
            <person name="White B."/>
            <person name="Walker D."/>
            <person name="Woodward J.R."/>
            <person name="Winckler T."/>
            <person name="Tanaka Y."/>
            <person name="Shaulsky G."/>
            <person name="Schleicher M."/>
            <person name="Weinstock G.M."/>
            <person name="Rosenthal A."/>
            <person name="Cox E.C."/>
            <person name="Chisholm R.L."/>
            <person name="Gibbs R.A."/>
            <person name="Loomis W.F."/>
            <person name="Platzer M."/>
            <person name="Kay R.R."/>
            <person name="Williams J.G."/>
            <person name="Dear P.H."/>
            <person name="Noegel A.A."/>
            <person name="Barrell B.G."/>
            <person name="Kuspa A."/>
        </authorList>
    </citation>
    <scope>NUCLEOTIDE SEQUENCE [LARGE SCALE GENOMIC DNA]</scope>
    <source>
        <strain>AX4</strain>
    </source>
</reference>
<reference key="2">
    <citation type="journal article" date="2004" name="Eukaryot. Cell">
        <title>Control of cell type proportioning in Dictyostelium discoideum by differentiation-inducing factor as determined by in situ hybridization.</title>
        <authorList>
            <person name="Maruo T."/>
            <person name="Sakamoto H."/>
            <person name="Iranfar N."/>
            <person name="Fuller D."/>
            <person name="Morio T."/>
            <person name="Urushihara H."/>
            <person name="Tanaka Y."/>
            <person name="Maeda M."/>
            <person name="Loomis W.F."/>
        </authorList>
    </citation>
    <scope>DEVELOPMENTAL STAGE [LARGE SCALE ANALYSIS]</scope>
</reference>
<reference key="3">
    <citation type="journal article" date="2007" name="Dev. Biol.">
        <title>A GPCR involved in post aggregation events in Dictyostelium discoideum.</title>
        <authorList>
            <person name="Prabhu Y."/>
            <person name="Mondal S."/>
            <person name="Eichinger L."/>
            <person name="Noegel A.A."/>
        </authorList>
    </citation>
    <scope>INDUCTION [LARGE SCALE ANALYSIS]</scope>
</reference>